<accession>P52572</accession>
<sequence>MPGLTIGDTVPNLELDSTHGKIRIHDYVGNGYVILFSHPGDFTPVCTTELAAMANYAKEFEKRGVKLLGISCDDVQSHKEWTKDIEAYKPGSKVTYPIMADPDRSAIKQLNMVDPDEKDAQGQLPSRTLHIVGPDKVVKLSFLYPSCTGRNMDEVVRAVDSLLTAAKHKVATPANWKPGECVVIAPGVSDEEAKKMFPQGFETADLPSKKGYLRFTKV</sequence>
<feature type="chain" id="PRO_0000135109" description="1-Cys peroxiredoxin PER1">
    <location>
        <begin position="1"/>
        <end position="218"/>
    </location>
</feature>
<feature type="domain" description="Thioredoxin" evidence="5">
    <location>
        <begin position="4"/>
        <end position="164"/>
    </location>
</feature>
<feature type="short sequence motif" description="Bipartite nuclear localization signal" evidence="4">
    <location>
        <begin position="194"/>
        <end position="217"/>
    </location>
</feature>
<feature type="active site" description="Cysteine sulfenic acid (-SOH) intermediate" evidence="3">
    <location>
        <position position="46"/>
    </location>
</feature>
<gene>
    <name type="primary">PER1</name>
</gene>
<name>REHY_HORVU</name>
<dbReference type="EC" id="1.11.1.24" evidence="3"/>
<dbReference type="EMBL" id="X76605">
    <property type="protein sequence ID" value="CAA54066.1"/>
    <property type="molecule type" value="mRNA"/>
</dbReference>
<dbReference type="EMBL" id="X96551">
    <property type="protein sequence ID" value="CAA65387.1"/>
    <property type="molecule type" value="Genomic_DNA"/>
</dbReference>
<dbReference type="PIR" id="S60285">
    <property type="entry name" value="S60285"/>
</dbReference>
<dbReference type="SMR" id="P52572"/>
<dbReference type="Allergome" id="9882">
    <property type="allergen name" value="Hor v 32"/>
</dbReference>
<dbReference type="PeroxiBase" id="4413">
    <property type="entry name" value="Hv1CysPrx"/>
</dbReference>
<dbReference type="ExpressionAtlas" id="P52572">
    <property type="expression patterns" value="baseline and differential"/>
</dbReference>
<dbReference type="GO" id="GO:0005829">
    <property type="term" value="C:cytosol"/>
    <property type="evidence" value="ECO:0007669"/>
    <property type="project" value="TreeGrafter"/>
</dbReference>
<dbReference type="GO" id="GO:0005739">
    <property type="term" value="C:mitochondrion"/>
    <property type="evidence" value="ECO:0007669"/>
    <property type="project" value="TreeGrafter"/>
</dbReference>
<dbReference type="GO" id="GO:0005634">
    <property type="term" value="C:nucleus"/>
    <property type="evidence" value="ECO:0007669"/>
    <property type="project" value="UniProtKB-SubCell"/>
</dbReference>
<dbReference type="GO" id="GO:0140824">
    <property type="term" value="F:thioredoxin-dependent peroxiredoxin activity"/>
    <property type="evidence" value="ECO:0007669"/>
    <property type="project" value="UniProtKB-EC"/>
</dbReference>
<dbReference type="GO" id="GO:0045454">
    <property type="term" value="P:cell redox homeostasis"/>
    <property type="evidence" value="ECO:0007669"/>
    <property type="project" value="TreeGrafter"/>
</dbReference>
<dbReference type="CDD" id="cd03016">
    <property type="entry name" value="PRX_1cys"/>
    <property type="match status" value="1"/>
</dbReference>
<dbReference type="FunFam" id="3.30.1020.10:FF:000001">
    <property type="entry name" value="1-Cys peroxiredoxin"/>
    <property type="match status" value="1"/>
</dbReference>
<dbReference type="FunFam" id="3.40.30.10:FF:000011">
    <property type="entry name" value="Peroxiredoxin PRX1"/>
    <property type="match status" value="1"/>
</dbReference>
<dbReference type="Gene3D" id="3.30.1020.10">
    <property type="entry name" value="Antioxidant, Horf6, Chain A, domain2"/>
    <property type="match status" value="1"/>
</dbReference>
<dbReference type="Gene3D" id="3.40.30.10">
    <property type="entry name" value="Glutaredoxin"/>
    <property type="match status" value="1"/>
</dbReference>
<dbReference type="InterPro" id="IPR000866">
    <property type="entry name" value="AhpC/TSA"/>
</dbReference>
<dbReference type="InterPro" id="IPR024706">
    <property type="entry name" value="Peroxiredoxin_AhpC-typ"/>
</dbReference>
<dbReference type="InterPro" id="IPR019479">
    <property type="entry name" value="Peroxiredoxin_C"/>
</dbReference>
<dbReference type="InterPro" id="IPR045020">
    <property type="entry name" value="PRX_1cys"/>
</dbReference>
<dbReference type="InterPro" id="IPR036249">
    <property type="entry name" value="Thioredoxin-like_sf"/>
</dbReference>
<dbReference type="InterPro" id="IPR013766">
    <property type="entry name" value="Thioredoxin_domain"/>
</dbReference>
<dbReference type="PANTHER" id="PTHR43503">
    <property type="entry name" value="MCG48959-RELATED"/>
    <property type="match status" value="1"/>
</dbReference>
<dbReference type="PANTHER" id="PTHR43503:SF4">
    <property type="entry name" value="PEROXIREDOXIN-6"/>
    <property type="match status" value="1"/>
</dbReference>
<dbReference type="Pfam" id="PF10417">
    <property type="entry name" value="1-cysPrx_C"/>
    <property type="match status" value="1"/>
</dbReference>
<dbReference type="Pfam" id="PF00578">
    <property type="entry name" value="AhpC-TSA"/>
    <property type="match status" value="1"/>
</dbReference>
<dbReference type="PIRSF" id="PIRSF000239">
    <property type="entry name" value="AHPC"/>
    <property type="match status" value="1"/>
</dbReference>
<dbReference type="SUPFAM" id="SSF52833">
    <property type="entry name" value="Thioredoxin-like"/>
    <property type="match status" value="1"/>
</dbReference>
<dbReference type="PROSITE" id="PS51352">
    <property type="entry name" value="THIOREDOXIN_2"/>
    <property type="match status" value="1"/>
</dbReference>
<keyword id="KW-0049">Antioxidant</keyword>
<keyword id="KW-0963">Cytoplasm</keyword>
<keyword id="KW-0539">Nucleus</keyword>
<keyword id="KW-0560">Oxidoreductase</keyword>
<keyword id="KW-0575">Peroxidase</keyword>
<keyword id="KW-0676">Redox-active center</keyword>
<proteinExistence type="evidence at transcript level"/>
<protein>
    <recommendedName>
        <fullName>1-Cys peroxiredoxin PER1</fullName>
        <ecNumber evidence="3">1.11.1.24</ecNumber>
    </recommendedName>
    <alternativeName>
        <fullName>B15C</fullName>
    </alternativeName>
    <alternativeName>
        <fullName>Rehydrin homolog</fullName>
    </alternativeName>
    <alternativeName>
        <fullName>Thioredoxin peroxidase</fullName>
    </alternativeName>
    <alternativeName>
        <fullName evidence="8">Thioredoxin-dependent peroxiredoxin</fullName>
    </alternativeName>
</protein>
<evidence type="ECO:0000250" key="1">
    <source>
        <dbReference type="UniProtKB" id="O04005"/>
    </source>
</evidence>
<evidence type="ECO:0000250" key="2">
    <source>
        <dbReference type="UniProtKB" id="O35244"/>
    </source>
</evidence>
<evidence type="ECO:0000250" key="3">
    <source>
        <dbReference type="UniProtKB" id="P30041"/>
    </source>
</evidence>
<evidence type="ECO:0000255" key="4"/>
<evidence type="ECO:0000255" key="5">
    <source>
        <dbReference type="PROSITE-ProRule" id="PRU00691"/>
    </source>
</evidence>
<evidence type="ECO:0000269" key="6">
    <source>
    </source>
</evidence>
<evidence type="ECO:0000269" key="7">
    <source>
    </source>
</evidence>
<evidence type="ECO:0000305" key="8"/>
<organism>
    <name type="scientific">Hordeum vulgare</name>
    <name type="common">Barley</name>
    <dbReference type="NCBI Taxonomy" id="4513"/>
    <lineage>
        <taxon>Eukaryota</taxon>
        <taxon>Viridiplantae</taxon>
        <taxon>Streptophyta</taxon>
        <taxon>Embryophyta</taxon>
        <taxon>Tracheophyta</taxon>
        <taxon>Spermatophyta</taxon>
        <taxon>Magnoliopsida</taxon>
        <taxon>Liliopsida</taxon>
        <taxon>Poales</taxon>
        <taxon>Poaceae</taxon>
        <taxon>BOP clade</taxon>
        <taxon>Pooideae</taxon>
        <taxon>Triticodae</taxon>
        <taxon>Triticeae</taxon>
        <taxon>Hordeinae</taxon>
        <taxon>Hordeum</taxon>
    </lineage>
</organism>
<comment type="function">
    <text evidence="1 3">Thiol-specific peroxidase that catalyzes the reduction of hydrogen peroxide and organic hydroperoxides to water and alcohols, respectively (By similarity). Seems to contribute to the inhibition of germination during stress (By similarity).</text>
</comment>
<comment type="catalytic activity">
    <reaction evidence="3">
        <text>a hydroperoxide + [thioredoxin]-dithiol = an alcohol + [thioredoxin]-disulfide + H2O</text>
        <dbReference type="Rhea" id="RHEA:62620"/>
        <dbReference type="Rhea" id="RHEA-COMP:10698"/>
        <dbReference type="Rhea" id="RHEA-COMP:10700"/>
        <dbReference type="ChEBI" id="CHEBI:15377"/>
        <dbReference type="ChEBI" id="CHEBI:29950"/>
        <dbReference type="ChEBI" id="CHEBI:30879"/>
        <dbReference type="ChEBI" id="CHEBI:35924"/>
        <dbReference type="ChEBI" id="CHEBI:50058"/>
        <dbReference type="EC" id="1.11.1.24"/>
    </reaction>
</comment>
<comment type="subcellular location">
    <subcellularLocation>
        <location evidence="6">Nucleus</location>
    </subcellularLocation>
    <subcellularLocation>
        <location evidence="1">Cytoplasm</location>
    </subcellularLocation>
</comment>
<comment type="tissue specificity">
    <text evidence="6">Embryo and aleurone cells.</text>
</comment>
<comment type="developmental stage">
    <text evidence="7">Expressed during late development in the aleurone and embryo.</text>
</comment>
<comment type="induction">
    <text evidence="7">By abscisic acid (ABA).</text>
</comment>
<comment type="miscellaneous">
    <text evidence="2">The active site is a conserved redox-active cysteine residue, the peroxidatic cysteine (C(P)), which makes the nucleophilic attack on the peroxide substrate. The peroxide oxidizes the C(P)-SH to cysteine sulfenic acid (C(P)-SOH), which then reacts with another cysteine residue, the resolving cysteine (C(R)), to form a disulfide bridge. The disulfide is subsequently reduced by an appropriate electron donor to complete the catalytic cycle. In this 1-Cys peroxiredoxin, no C(R) is present and C(P) instead forms a disulfide with a cysteine from another protein or with a small thiol molecule.</text>
</comment>
<comment type="similarity">
    <text evidence="8">Belongs to the peroxiredoxin family. Prx6 subfamily.</text>
</comment>
<reference key="1">
    <citation type="journal article" date="1994" name="Plant J.">
        <title>Transcripts encoding an oleosin and a dormancy-related protein are present in both the aleurone layer and the embryo of developing barley (Hordeum vulgare L.) seeds.</title>
        <authorList>
            <person name="Aalen R.B."/>
            <person name="Opsahl-Ferstad H.G."/>
            <person name="Linnestad C."/>
            <person name="Olsen O.A."/>
        </authorList>
    </citation>
    <scope>NUCLEOTIDE SEQUENCE [MRNA]</scope>
    <scope>DEVELOPMENTAL STAGE</scope>
    <scope>INDUCTION</scope>
    <source>
        <strain>cv. Bomi</strain>
        <tissue>Aleurone</tissue>
    </source>
</reference>
<reference key="2">
    <citation type="journal article" date="1996" name="Plant Mol. Biol.">
        <title>A peroxiredoxin antioxidant is encoded by a dormancy-related gene, Per1, expressed during late development in the aleurone and embryo of barley grains.</title>
        <authorList>
            <person name="Stacy R.A.P."/>
            <person name="Munthe E."/>
            <person name="Steinum T."/>
            <person name="Sharma B."/>
            <person name="Aalen R.B."/>
        </authorList>
    </citation>
    <scope>NUCLEOTIDE SEQUENCE [GENOMIC DNA]</scope>
    <source>
        <strain>cv. Bomi</strain>
    </source>
</reference>
<reference key="3">
    <citation type="journal article" date="1999" name="Plant J.">
        <title>The dormancy-related peroxiredoxin anti-oxidant, PER1, is localized to the nucleus of barley embryo and aleurone cells.</title>
        <authorList>
            <person name="Stacy R.A.P."/>
            <person name="Nordeng T.W."/>
            <person name="Culianez-Macia F.A."/>
            <person name="Aalen R.B."/>
        </authorList>
    </citation>
    <scope>SUBCELLULAR LOCATION</scope>
    <scope>TISSUE SPECIFICITY</scope>
</reference>